<name>MAMP_MAGGM</name>
<sequence>MNSKLVLLVVGVVFALVLVIGRQGGVVAPQSISVSPQMSTAAPVAAPIAFPQATNVAMAVEPMAAAGGTVAAMESPLPNFVPRNLKVFEGHWQGMDGRLMTEELARKLNYPRGVQGVLLGEVTLNAAFSGLLGGDVVVRIDDTPVTNMENFQAATRNVANRSEARISVIRKDNRPGTPVLRKLTVVLRAAEGGLGFAQLEGAPMILPGDPRPHGYRGACTDCHPVGQGFELSPDPDLISLPPSAITRDAVTRGVSPHEVRGPCEACHVIN</sequence>
<dbReference type="EC" id="1.-.-.-" evidence="9"/>
<dbReference type="EMBL" id="AF374354">
    <property type="protein sequence ID" value="AAL09995.1"/>
    <property type="molecule type" value="Genomic_DNA"/>
</dbReference>
<dbReference type="EMBL" id="BX571797">
    <property type="protein sequence ID" value="CAE12039.1"/>
    <property type="molecule type" value="Genomic_DNA"/>
</dbReference>
<dbReference type="EMBL" id="AM085146">
    <property type="protein sequence ID" value="CAJ30123.1"/>
    <property type="molecule type" value="Genomic_DNA"/>
</dbReference>
<dbReference type="EMBL" id="CU459003">
    <property type="protein sequence ID" value="CAM78030.1"/>
    <property type="molecule type" value="Genomic_DNA"/>
</dbReference>
<dbReference type="EMBL" id="HG794546">
    <property type="protein sequence ID" value="CDK99587.1"/>
    <property type="molecule type" value="Genomic_DNA"/>
</dbReference>
<dbReference type="RefSeq" id="WP_024080583.1">
    <property type="nucleotide sequence ID" value="NZ_CP027526.1"/>
</dbReference>
<dbReference type="SMR" id="Q93DZ0"/>
<dbReference type="STRING" id="1430440.MGMSRv2__2372"/>
<dbReference type="KEGG" id="mgry:MSR1_03430"/>
<dbReference type="KEGG" id="mgy:MGMSRv2__2372"/>
<dbReference type="eggNOG" id="COG0265">
    <property type="taxonomic scope" value="Bacteria"/>
</dbReference>
<dbReference type="HOGENOM" id="CLU_1029742_0_0_5"/>
<dbReference type="OrthoDB" id="7361255at2"/>
<dbReference type="Proteomes" id="UP000018922">
    <property type="component" value="Chromosome I"/>
</dbReference>
<dbReference type="GO" id="GO:0005886">
    <property type="term" value="C:plasma membrane"/>
    <property type="evidence" value="ECO:0000250"/>
    <property type="project" value="UniProtKB"/>
</dbReference>
<dbReference type="GO" id="GO:0046872">
    <property type="term" value="F:metal ion binding"/>
    <property type="evidence" value="ECO:0007669"/>
    <property type="project" value="UniProtKB-KW"/>
</dbReference>
<dbReference type="GO" id="GO:0016491">
    <property type="term" value="F:oxidoreductase activity"/>
    <property type="evidence" value="ECO:0007669"/>
    <property type="project" value="UniProtKB-KW"/>
</dbReference>
<dbReference type="Gene3D" id="2.30.42.60">
    <property type="match status" value="1"/>
</dbReference>
<dbReference type="InterPro" id="IPR040963">
    <property type="entry name" value="MCR"/>
</dbReference>
<dbReference type="InterPro" id="IPR036034">
    <property type="entry name" value="PDZ_sf"/>
</dbReference>
<dbReference type="NCBIfam" id="NF040965">
    <property type="entry name" value="MamP"/>
    <property type="match status" value="1"/>
</dbReference>
<dbReference type="Pfam" id="PF18509">
    <property type="entry name" value="MCR"/>
    <property type="match status" value="1"/>
</dbReference>
<dbReference type="SUPFAM" id="SSF50156">
    <property type="entry name" value="PDZ domain-like"/>
    <property type="match status" value="1"/>
</dbReference>
<organism>
    <name type="scientific">Magnetospirillum gryphiswaldense (strain DSM 6361 / JCM 21280 / NBRC 15271 / MSR-1)</name>
    <dbReference type="NCBI Taxonomy" id="431944"/>
    <lineage>
        <taxon>Bacteria</taxon>
        <taxon>Pseudomonadati</taxon>
        <taxon>Pseudomonadota</taxon>
        <taxon>Alphaproteobacteria</taxon>
        <taxon>Rhodospirillales</taxon>
        <taxon>Rhodospirillaceae</taxon>
        <taxon>Magnetospirillum</taxon>
    </lineage>
</organism>
<proteinExistence type="inferred from homology"/>
<feature type="chain" id="PRO_0000447782" description="Multi-heme protein MamP" evidence="3">
    <location>
        <begin position="1"/>
        <end position="270"/>
    </location>
</feature>
<feature type="topological domain" description="Cytoplasmic" evidence="9">
    <location>
        <begin position="1"/>
        <end position="6"/>
    </location>
</feature>
<feature type="transmembrane region" evidence="13">
    <location>
        <begin position="7"/>
        <end position="20"/>
    </location>
</feature>
<feature type="topological domain" description="Lumenal" evidence="9">
    <location>
        <begin position="21"/>
        <end position="270"/>
    </location>
</feature>
<feature type="region of interest" description="PDZ" evidence="13">
    <location>
        <begin position="84"/>
        <end position="201"/>
    </location>
</feature>
<feature type="short sequence motif" description="MCR (magnetochrome) 1" evidence="13">
    <location>
        <begin position="205"/>
        <end position="225"/>
    </location>
</feature>
<feature type="short sequence motif" description="MCR 2" evidence="13">
    <location>
        <begin position="245"/>
        <end position="269"/>
    </location>
</feature>
<feature type="binding site" description="covalent" evidence="1 12">
    <location>
        <position position="219"/>
    </location>
    <ligand>
        <name>heme</name>
        <dbReference type="ChEBI" id="CHEBI:30413"/>
        <label>1</label>
    </ligand>
</feature>
<feature type="binding site" description="covalent" evidence="1 12">
    <location>
        <position position="222"/>
    </location>
    <ligand>
        <name>heme</name>
        <dbReference type="ChEBI" id="CHEBI:30413"/>
        <label>1</label>
    </ligand>
</feature>
<feature type="binding site" description="axial binding residue" evidence="1 12">
    <location>
        <position position="223"/>
    </location>
    <ligand>
        <name>heme</name>
        <dbReference type="ChEBI" id="CHEBI:30413"/>
        <label>1</label>
    </ligand>
    <ligandPart>
        <name>Fe</name>
        <dbReference type="ChEBI" id="CHEBI:18248"/>
    </ligandPart>
</feature>
<feature type="binding site" description="covalent" evidence="1 12">
    <location>
        <position position="263"/>
    </location>
    <ligand>
        <name>heme</name>
        <dbReference type="ChEBI" id="CHEBI:30413"/>
        <label>2</label>
    </ligand>
</feature>
<feature type="binding site" description="covalent" evidence="1 12">
    <location>
        <position position="266"/>
    </location>
    <ligand>
        <name>heme</name>
        <dbReference type="ChEBI" id="CHEBI:30413"/>
        <label>2</label>
    </ligand>
</feature>
<feature type="binding site" description="axial binding residue" evidence="1 12">
    <location>
        <position position="267"/>
    </location>
    <ligand>
        <name>heme</name>
        <dbReference type="ChEBI" id="CHEBI:30413"/>
        <label>2</label>
    </ligand>
    <ligandPart>
        <name>Fe</name>
        <dbReference type="ChEBI" id="CHEBI:18248"/>
    </ligandPart>
</feature>
<accession>Q93DZ0</accession>
<accession>V6F2H3</accession>
<keyword id="KW-0091">Biomineralization</keyword>
<keyword id="KW-0997">Cell inner membrane</keyword>
<keyword id="KW-1003">Cell membrane</keyword>
<keyword id="KW-0349">Heme</keyword>
<keyword id="KW-0408">Iron</keyword>
<keyword id="KW-0472">Membrane</keyword>
<keyword id="KW-0479">Metal-binding</keyword>
<keyword id="KW-0560">Oxidoreductase</keyword>
<keyword id="KW-1185">Reference proteome</keyword>
<keyword id="KW-0812">Transmembrane</keyword>
<keyword id="KW-1133">Transmembrane helix</keyword>
<comment type="function">
    <text evidence="1 2">Involved in redox-control of magnetite formation (By similarity). Oxidizes Fe(2+) at alkaline pH; successively forms ferrihydrite (Fe(3+)(2)O(3) 0.5 H(2)O) then magnetite (Fe(3)O(4)) from an Fe(2+) solution (By similarity).</text>
</comment>
<comment type="cofactor">
    <cofactor evidence="1 12">
        <name>heme</name>
        <dbReference type="ChEBI" id="CHEBI:30413"/>
    </cofactor>
    <text evidence="1 12">Binds 2 heme groups via the magnetochrome (MCR) motifs.</text>
</comment>
<comment type="subunit">
    <text evidence="2">Homodimer.</text>
</comment>
<comment type="subcellular location">
    <subcellularLocation>
        <location evidence="2">Cell inner membrane</location>
        <topology evidence="2">Single-pass membrane protein</topology>
    </subcellularLocation>
    <text evidence="2">Not seen in magnetosome membranes.</text>
</comment>
<comment type="induction">
    <text evidence="11">Part of the probable 17 gene mamAB operon.</text>
</comment>
<comment type="domain">
    <text evidence="1">The dimer forms a pocket of about 8 X 15 Angstroms, lined with acidic residues, which may bind 2 Fe(2+) ions.</text>
</comment>
<comment type="PTM">
    <text evidence="2">Subject to proteolytic cleavage which requires both MamE and MamO.</text>
</comment>
<comment type="disruption phenotype">
    <text evidence="4 6">Intermediate magnetic response, few large magnetosomes with magnetite, makes many very small, irregular hematite crystals. Near wild-type localization of MamC (PubMed:24816605). Deletion of approximately 80 kb of DNA, including this operon, leads to cells that are non-magnetic, lack internal membrane systems, grow poorly, have reduced mobility and take-up and accumulate iron poorly (PubMed:13129949).</text>
</comment>
<comment type="miscellaneous">
    <text evidence="10">This bacteria makes up to 60 cubo-octahedral magnetosomes of about 45 nm in diameter which contain membrane-bound crystals of magnetite (Fe(3)O(4)).</text>
</comment>
<comment type="miscellaneous">
    <text evidence="5">Expression of just the minimal mamAB gene cluster (MGMSRv2__2365 to MGMSRv2__2381), including this gene, is sufficient to form a minimal magnetosome chain with small magnetite particles.</text>
</comment>
<comment type="similarity">
    <text evidence="9">Belongs to the magnetosome MamP family.</text>
</comment>
<protein>
    <recommendedName>
        <fullName evidence="9">Multi-heme protein MamP</fullName>
        <ecNumber evidence="9">1.-.-.-</ecNumber>
    </recommendedName>
    <alternativeName>
        <fullName evidence="8">Magnetochrome MamP</fullName>
    </alternativeName>
    <alternativeName>
        <fullName>Magnetosome-associated protein MamP</fullName>
    </alternativeName>
</protein>
<gene>
    <name evidence="7" type="primary">mamP</name>
    <name type="ordered locus">MGMSRv2__2372</name>
    <name type="ORF">mgI494</name>
    <name type="ORF">MGR_4098</name>
</gene>
<evidence type="ECO:0000250" key="1">
    <source>
        <dbReference type="UniProtKB" id="A0A1S7LCW6"/>
    </source>
</evidence>
<evidence type="ECO:0000250" key="2">
    <source>
        <dbReference type="UniProtKB" id="Q2W8Q1"/>
    </source>
</evidence>
<evidence type="ECO:0000255" key="3"/>
<evidence type="ECO:0000269" key="4">
    <source>
    </source>
</evidence>
<evidence type="ECO:0000269" key="5">
    <source>
    </source>
</evidence>
<evidence type="ECO:0000269" key="6">
    <source>
    </source>
</evidence>
<evidence type="ECO:0000303" key="7">
    <source>
    </source>
</evidence>
<evidence type="ECO:0000303" key="8">
    <source>
    </source>
</evidence>
<evidence type="ECO:0000305" key="9"/>
<evidence type="ECO:0000305" key="10">
    <source>
    </source>
</evidence>
<evidence type="ECO:0000305" key="11">
    <source>
    </source>
</evidence>
<evidence type="ECO:0000305" key="12">
    <source>
    </source>
</evidence>
<evidence type="ECO:0000305" key="13">
    <source>
    </source>
</evidence>
<reference key="1">
    <citation type="journal article" date="2001" name="Appl. Environ. Microbiol.">
        <title>A large gene cluster encoding several magnetosome proteins is conserved in different species of magnetotactic bacteria.</title>
        <authorList>
            <person name="Grunberg K."/>
            <person name="Wawer C."/>
            <person name="Tebo B.M."/>
            <person name="Schuler D."/>
        </authorList>
    </citation>
    <scope>NUCLEOTIDE SEQUENCE [GENOMIC DNA]</scope>
    <source>
        <strain>DSM 6361 / JCM 21280 / NBRC 15271 / MSR-1</strain>
    </source>
</reference>
<reference key="2">
    <citation type="journal article" date="2003" name="J. Bacteriol.">
        <title>Characterization of a spontaneous nonmagnetic mutant of Magnetospirillum gryphiswaldense reveals a large deletion comprising a putative magnetosome island.</title>
        <authorList>
            <person name="Schuebbe S."/>
            <person name="Kube M."/>
            <person name="Scheffel A."/>
            <person name="Wawer C."/>
            <person name="Heyen U."/>
            <person name="Meyerdierks A."/>
            <person name="Madkour M.H."/>
            <person name="Mayer F."/>
            <person name="Reinhardt R."/>
            <person name="Schueler D."/>
        </authorList>
    </citation>
    <scope>NUCLEOTIDE SEQUENCE [GENOMIC DNA]</scope>
    <scope>PROBABLE OPERON</scope>
    <scope>DISRUPTION PHENOTYPE</scope>
    <source>
        <strain>DSM 6361 / JCM 21280 / NBRC 15271 / MSR-1</strain>
    </source>
</reference>
<reference key="3">
    <citation type="journal article" date="2005" name="J. Bacteriol.">
        <title>A hypervariable 130-kilobase genomic region of Magnetospirillum gryphiswaldense comprises a magnetosome island which undergoes frequent rearrangements during stationary growth.</title>
        <authorList>
            <person name="Ullrich S."/>
            <person name="Kube M."/>
            <person name="Schuebbe S."/>
            <person name="Reinhardt R."/>
            <person name="Schueler D."/>
        </authorList>
    </citation>
    <scope>NUCLEOTIDE SEQUENCE [GENOMIC DNA]</scope>
    <source>
        <strain>DSM 6361 / JCM 21280 / NBRC 15271 / MSR-1</strain>
    </source>
</reference>
<reference key="4">
    <citation type="journal article" date="2007" name="J. Bacteriol.">
        <title>Comparative genome analysis of four magnetotactic bacteria reveals a complex set of group-specific genes implicated in magnetosome biomineralization and function.</title>
        <authorList>
            <person name="Richter M."/>
            <person name="Kube M."/>
            <person name="Bazylinski D.A."/>
            <person name="Lombardot T."/>
            <person name="Gloeckner F.O."/>
            <person name="Reinhardt R."/>
            <person name="Schueler D."/>
        </authorList>
    </citation>
    <scope>NUCLEOTIDE SEQUENCE [LARGE SCALE GENOMIC DNA]</scope>
    <source>
        <strain>DSM 6361 / JCM 21280 / NBRC 15271 / MSR-1</strain>
    </source>
</reference>
<reference key="5">
    <citation type="journal article" date="2014" name="Genome Announc.">
        <title>Complete genome sequence of Magnetospirillum gryphiswaldense MSR-1.</title>
        <authorList>
            <person name="Wang X."/>
            <person name="Wang Q."/>
            <person name="Zhang W."/>
            <person name="Wang Y."/>
            <person name="Li L."/>
            <person name="Wen T."/>
            <person name="Zhang T."/>
            <person name="Zhang Y."/>
            <person name="Xu J."/>
            <person name="Hu J."/>
            <person name="Li S."/>
            <person name="Liu L."/>
            <person name="Liu J."/>
            <person name="Jiang W."/>
            <person name="Tian J."/>
            <person name="Li Y."/>
            <person name="Schuler D."/>
            <person name="Wang L."/>
            <person name="Li J."/>
        </authorList>
    </citation>
    <scope>NUCLEOTIDE SEQUENCE [LARGE SCALE GENOMIC DNA]</scope>
    <source>
        <strain>DSM 6361 / JCM 21280 / NBRC 15271 / MSR-1</strain>
    </source>
</reference>
<reference key="6">
    <citation type="journal article" date="2011" name="PLoS ONE">
        <title>Functional analysis of the magnetosome island in Magnetospirillum gryphiswaldense: the mamAB operon is sufficient for magnetite biomineralization.</title>
        <authorList>
            <person name="Lohsse A."/>
            <person name="Ullrich S."/>
            <person name="Katzmann E."/>
            <person name="Borg S."/>
            <person name="Wanner G."/>
            <person name="Richter M."/>
            <person name="Voigt B."/>
            <person name="Schweder T."/>
            <person name="Schueler D."/>
        </authorList>
    </citation>
    <scope>MINIMAL MAGNETOSOME ISLAND</scope>
    <source>
        <strain>DSM 6361 / JCM 21280 / NBRC 15271 / MSR-1</strain>
    </source>
</reference>
<reference key="7">
    <citation type="journal article" date="2012" name="Biochem. Soc. Trans.">
        <title>Magnetochrome: a c-type cytochrome domain specific to magnetotatic bacteria.</title>
        <authorList>
            <person name="Siponen M.I."/>
            <person name="Adryanczyk G."/>
            <person name="Ginet N."/>
            <person name="Arnoux P."/>
            <person name="Pignol D."/>
        </authorList>
    </citation>
    <scope>POSSIBLE COFACTOR</scope>
    <source>
        <strain>DSM 6361 / JCM 21280 / NBRC 15271 / MSR-1</strain>
    </source>
</reference>
<reference key="8">
    <citation type="journal article" date="2013" name="Nature">
        <title>Structural insight into magnetochrome-mediated magnetite biomineralization.</title>
        <authorList>
            <person name="Siponen M.I."/>
            <person name="Legrand P."/>
            <person name="Widdrat M."/>
            <person name="Jones S.R."/>
            <person name="Zhang W.J."/>
            <person name="Chang M.C."/>
            <person name="Faivre D."/>
            <person name="Arnoux P."/>
            <person name="Pignol D."/>
        </authorList>
    </citation>
    <scope>DOMAIN</scope>
</reference>
<reference key="9">
    <citation type="journal article" date="2014" name="J. Bacteriol.">
        <title>Genetic dissection of the mamAB and mms6 operons reveals a gene set essential for magnetosome biogenesis in Magnetospirillum gryphiswaldense.</title>
        <authorList>
            <person name="Lohsse A."/>
            <person name="Borg S."/>
            <person name="Raschdorf O."/>
            <person name="Kolinko I."/>
            <person name="Tompa E."/>
            <person name="Posfai M."/>
            <person name="Faivre D."/>
            <person name="Baumgartner J."/>
            <person name="Schueler D."/>
        </authorList>
    </citation>
    <scope>DISRUPTION PHENOTYPE</scope>
    <source>
        <strain>DSM 6361 / JCM 21280 / NBRC 15271 / MSR-1</strain>
    </source>
</reference>